<reference key="1">
    <citation type="submission" date="2007-02" db="EMBL/GenBank/DDBJ databases">
        <title>Complete sequence of chromosome 2 of Rhodobacter sphaeroides ATCC 17029.</title>
        <authorList>
            <person name="Copeland A."/>
            <person name="Lucas S."/>
            <person name="Lapidus A."/>
            <person name="Barry K."/>
            <person name="Detter J.C."/>
            <person name="Glavina del Rio T."/>
            <person name="Hammon N."/>
            <person name="Israni S."/>
            <person name="Dalin E."/>
            <person name="Tice H."/>
            <person name="Pitluck S."/>
            <person name="Kiss H."/>
            <person name="Brettin T."/>
            <person name="Bruce D."/>
            <person name="Han C."/>
            <person name="Tapia R."/>
            <person name="Gilna P."/>
            <person name="Schmutz J."/>
            <person name="Larimer F."/>
            <person name="Land M."/>
            <person name="Hauser L."/>
            <person name="Kyrpides N."/>
            <person name="Mikhailova N."/>
            <person name="Richardson P."/>
            <person name="Mackenzie C."/>
            <person name="Choudhary M."/>
            <person name="Donohue T.J."/>
            <person name="Kaplan S."/>
        </authorList>
    </citation>
    <scope>NUCLEOTIDE SEQUENCE [LARGE SCALE GENOMIC DNA]</scope>
    <source>
        <strain>ATCC 17029 / ATH 2.4.9</strain>
    </source>
</reference>
<sequence>MSEARKLFIKTYGCQMNVYDSERMAEALGAKGYVLTEVAEEADMVLLNTCHIREKAAEKVYSDLGRLRPLKTAKPDLKIGVAGCVAQAEGEEILKRMPLVDLVVGPQSYHRLPDMLDRTEGGARVVDTDFPEEDKFDHLPERKATRGPAAFLTVQEGCDKFCAFCVVPYTRGAEVSRPFARLMAEARGLVERGVREITLLGQNVNAWSSDGRGLGGLIRELARIDGLERLRYTTSHPNDMADDLIEAHGAEPKLMPYLHLPVQSGSDRILKAMNRKHTAEHYLRLIERIRAARPDILLTSDFIVGFPGETEADFEATLDLIRAVGFGSAFSFKYSARPGTPAAEKPELPGEVCDARLQRLQALVTEQQRAAQMAMVGREVGVLYEKAGRLPGQMVGKSDHLHAVHVEDKAGRVGDLVRVRITASAPNSLAGERLGA</sequence>
<comment type="function">
    <text evidence="1">Catalyzes the methylthiolation of N6-(dimethylallyl)adenosine (i(6)A), leading to the formation of 2-methylthio-N6-(dimethylallyl)adenosine (ms(2)i(6)A) at position 37 in tRNAs that read codons beginning with uridine.</text>
</comment>
<comment type="catalytic activity">
    <reaction evidence="1">
        <text>N(6)-dimethylallyladenosine(37) in tRNA + (sulfur carrier)-SH + AH2 + 2 S-adenosyl-L-methionine = 2-methylsulfanyl-N(6)-dimethylallyladenosine(37) in tRNA + (sulfur carrier)-H + 5'-deoxyadenosine + L-methionine + A + S-adenosyl-L-homocysteine + 2 H(+)</text>
        <dbReference type="Rhea" id="RHEA:37067"/>
        <dbReference type="Rhea" id="RHEA-COMP:10375"/>
        <dbReference type="Rhea" id="RHEA-COMP:10376"/>
        <dbReference type="Rhea" id="RHEA-COMP:14737"/>
        <dbReference type="Rhea" id="RHEA-COMP:14739"/>
        <dbReference type="ChEBI" id="CHEBI:13193"/>
        <dbReference type="ChEBI" id="CHEBI:15378"/>
        <dbReference type="ChEBI" id="CHEBI:17319"/>
        <dbReference type="ChEBI" id="CHEBI:17499"/>
        <dbReference type="ChEBI" id="CHEBI:29917"/>
        <dbReference type="ChEBI" id="CHEBI:57844"/>
        <dbReference type="ChEBI" id="CHEBI:57856"/>
        <dbReference type="ChEBI" id="CHEBI:59789"/>
        <dbReference type="ChEBI" id="CHEBI:64428"/>
        <dbReference type="ChEBI" id="CHEBI:74415"/>
        <dbReference type="ChEBI" id="CHEBI:74417"/>
        <dbReference type="EC" id="2.8.4.3"/>
    </reaction>
</comment>
<comment type="cofactor">
    <cofactor evidence="1">
        <name>[4Fe-4S] cluster</name>
        <dbReference type="ChEBI" id="CHEBI:49883"/>
    </cofactor>
    <text evidence="1">Binds 2 [4Fe-4S] clusters. One cluster is coordinated with 3 cysteines and an exchangeable S-adenosyl-L-methionine.</text>
</comment>
<comment type="subunit">
    <text evidence="1">Monomer.</text>
</comment>
<comment type="subcellular location">
    <subcellularLocation>
        <location evidence="1">Cytoplasm</location>
    </subcellularLocation>
</comment>
<comment type="similarity">
    <text evidence="1">Belongs to the methylthiotransferase family. MiaB subfamily.</text>
</comment>
<organism>
    <name type="scientific">Cereibacter sphaeroides (strain ATCC 17029 / ATH 2.4.9)</name>
    <name type="common">Rhodobacter sphaeroides</name>
    <dbReference type="NCBI Taxonomy" id="349101"/>
    <lineage>
        <taxon>Bacteria</taxon>
        <taxon>Pseudomonadati</taxon>
        <taxon>Pseudomonadota</taxon>
        <taxon>Alphaproteobacteria</taxon>
        <taxon>Rhodobacterales</taxon>
        <taxon>Paracoccaceae</taxon>
        <taxon>Cereibacter</taxon>
    </lineage>
</organism>
<keyword id="KW-0004">4Fe-4S</keyword>
<keyword id="KW-0963">Cytoplasm</keyword>
<keyword id="KW-0408">Iron</keyword>
<keyword id="KW-0411">Iron-sulfur</keyword>
<keyword id="KW-0479">Metal-binding</keyword>
<keyword id="KW-0949">S-adenosyl-L-methionine</keyword>
<keyword id="KW-0808">Transferase</keyword>
<keyword id="KW-0819">tRNA processing</keyword>
<evidence type="ECO:0000255" key="1">
    <source>
        <dbReference type="HAMAP-Rule" id="MF_01864"/>
    </source>
</evidence>
<evidence type="ECO:0000255" key="2">
    <source>
        <dbReference type="PROSITE-ProRule" id="PRU01266"/>
    </source>
</evidence>
<name>MIAB_CERS1</name>
<proteinExistence type="inferred from homology"/>
<gene>
    <name evidence="1" type="primary">miaB</name>
    <name type="ordered locus">Rsph17029_3285</name>
</gene>
<protein>
    <recommendedName>
        <fullName evidence="1">tRNA-2-methylthio-N(6)-dimethylallyladenosine synthase</fullName>
        <ecNumber evidence="1">2.8.4.3</ecNumber>
    </recommendedName>
    <alternativeName>
        <fullName evidence="1">(Dimethylallyl)adenosine tRNA methylthiotransferase MiaB</fullName>
    </alternativeName>
    <alternativeName>
        <fullName evidence="1">tRNA-i(6)A37 methylthiotransferase</fullName>
    </alternativeName>
</protein>
<dbReference type="EC" id="2.8.4.3" evidence="1"/>
<dbReference type="EMBL" id="CP000578">
    <property type="protein sequence ID" value="ABN78381.1"/>
    <property type="molecule type" value="Genomic_DNA"/>
</dbReference>
<dbReference type="RefSeq" id="WP_011842233.1">
    <property type="nucleotide sequence ID" value="NC_009050.1"/>
</dbReference>
<dbReference type="SMR" id="A3PPW5"/>
<dbReference type="KEGG" id="rsh:Rsph17029_3285"/>
<dbReference type="HOGENOM" id="CLU_018697_2_0_5"/>
<dbReference type="GO" id="GO:0005829">
    <property type="term" value="C:cytosol"/>
    <property type="evidence" value="ECO:0007669"/>
    <property type="project" value="TreeGrafter"/>
</dbReference>
<dbReference type="GO" id="GO:0051539">
    <property type="term" value="F:4 iron, 4 sulfur cluster binding"/>
    <property type="evidence" value="ECO:0007669"/>
    <property type="project" value="UniProtKB-UniRule"/>
</dbReference>
<dbReference type="GO" id="GO:0046872">
    <property type="term" value="F:metal ion binding"/>
    <property type="evidence" value="ECO:0007669"/>
    <property type="project" value="UniProtKB-KW"/>
</dbReference>
<dbReference type="GO" id="GO:0035597">
    <property type="term" value="F:N6-isopentenyladenosine methylthiotransferase activity"/>
    <property type="evidence" value="ECO:0007669"/>
    <property type="project" value="TreeGrafter"/>
</dbReference>
<dbReference type="CDD" id="cd01335">
    <property type="entry name" value="Radical_SAM"/>
    <property type="match status" value="1"/>
</dbReference>
<dbReference type="FunFam" id="3.40.50.12160:FF:000001">
    <property type="entry name" value="tRNA-2-methylthio-N(6)-dimethylallyladenosine synthase"/>
    <property type="match status" value="1"/>
</dbReference>
<dbReference type="FunFam" id="3.80.30.20:FF:000001">
    <property type="entry name" value="tRNA-2-methylthio-N(6)-dimethylallyladenosine synthase 2"/>
    <property type="match status" value="1"/>
</dbReference>
<dbReference type="Gene3D" id="3.40.50.12160">
    <property type="entry name" value="Methylthiotransferase, N-terminal domain"/>
    <property type="match status" value="1"/>
</dbReference>
<dbReference type="Gene3D" id="3.80.30.20">
    <property type="entry name" value="tm_1862 like domain"/>
    <property type="match status" value="1"/>
</dbReference>
<dbReference type="HAMAP" id="MF_01864">
    <property type="entry name" value="tRNA_metthiotr_MiaB"/>
    <property type="match status" value="1"/>
</dbReference>
<dbReference type="InterPro" id="IPR006638">
    <property type="entry name" value="Elp3/MiaA/NifB-like_rSAM"/>
</dbReference>
<dbReference type="InterPro" id="IPR005839">
    <property type="entry name" value="Methylthiotransferase"/>
</dbReference>
<dbReference type="InterPro" id="IPR020612">
    <property type="entry name" value="Methylthiotransferase_CS"/>
</dbReference>
<dbReference type="InterPro" id="IPR013848">
    <property type="entry name" value="Methylthiotransferase_N"/>
</dbReference>
<dbReference type="InterPro" id="IPR038135">
    <property type="entry name" value="Methylthiotransferase_N_sf"/>
</dbReference>
<dbReference type="InterPro" id="IPR006463">
    <property type="entry name" value="MiaB_methiolase"/>
</dbReference>
<dbReference type="InterPro" id="IPR007197">
    <property type="entry name" value="rSAM"/>
</dbReference>
<dbReference type="InterPro" id="IPR023404">
    <property type="entry name" value="rSAM_horseshoe"/>
</dbReference>
<dbReference type="InterPro" id="IPR002792">
    <property type="entry name" value="TRAM_dom"/>
</dbReference>
<dbReference type="NCBIfam" id="TIGR01574">
    <property type="entry name" value="miaB-methiolase"/>
    <property type="match status" value="1"/>
</dbReference>
<dbReference type="NCBIfam" id="TIGR00089">
    <property type="entry name" value="MiaB/RimO family radical SAM methylthiotransferase"/>
    <property type="match status" value="1"/>
</dbReference>
<dbReference type="PANTHER" id="PTHR43020">
    <property type="entry name" value="CDK5 REGULATORY SUBUNIT-ASSOCIATED PROTEIN 1"/>
    <property type="match status" value="1"/>
</dbReference>
<dbReference type="PANTHER" id="PTHR43020:SF2">
    <property type="entry name" value="MITOCHONDRIAL TRNA METHYLTHIOTRANSFERASE CDK5RAP1"/>
    <property type="match status" value="1"/>
</dbReference>
<dbReference type="Pfam" id="PF04055">
    <property type="entry name" value="Radical_SAM"/>
    <property type="match status" value="1"/>
</dbReference>
<dbReference type="Pfam" id="PF01938">
    <property type="entry name" value="TRAM"/>
    <property type="match status" value="1"/>
</dbReference>
<dbReference type="Pfam" id="PF00919">
    <property type="entry name" value="UPF0004"/>
    <property type="match status" value="1"/>
</dbReference>
<dbReference type="SFLD" id="SFLDF00273">
    <property type="entry name" value="(dimethylallyl)adenosine_tRNA"/>
    <property type="match status" value="1"/>
</dbReference>
<dbReference type="SFLD" id="SFLDG01082">
    <property type="entry name" value="B12-binding_domain_containing"/>
    <property type="match status" value="1"/>
</dbReference>
<dbReference type="SFLD" id="SFLDS00029">
    <property type="entry name" value="Radical_SAM"/>
    <property type="match status" value="1"/>
</dbReference>
<dbReference type="SMART" id="SM00729">
    <property type="entry name" value="Elp3"/>
    <property type="match status" value="1"/>
</dbReference>
<dbReference type="SUPFAM" id="SSF102114">
    <property type="entry name" value="Radical SAM enzymes"/>
    <property type="match status" value="1"/>
</dbReference>
<dbReference type="PROSITE" id="PS51449">
    <property type="entry name" value="MTTASE_N"/>
    <property type="match status" value="1"/>
</dbReference>
<dbReference type="PROSITE" id="PS01278">
    <property type="entry name" value="MTTASE_RADICAL"/>
    <property type="match status" value="1"/>
</dbReference>
<dbReference type="PROSITE" id="PS51918">
    <property type="entry name" value="RADICAL_SAM"/>
    <property type="match status" value="1"/>
</dbReference>
<dbReference type="PROSITE" id="PS50926">
    <property type="entry name" value="TRAM"/>
    <property type="match status" value="1"/>
</dbReference>
<accession>A3PPW5</accession>
<feature type="chain" id="PRO_0000374489" description="tRNA-2-methylthio-N(6)-dimethylallyladenosine synthase">
    <location>
        <begin position="1"/>
        <end position="436"/>
    </location>
</feature>
<feature type="domain" description="MTTase N-terminal" evidence="1">
    <location>
        <begin position="5"/>
        <end position="121"/>
    </location>
</feature>
<feature type="domain" description="Radical SAM core" evidence="2">
    <location>
        <begin position="144"/>
        <end position="374"/>
    </location>
</feature>
<feature type="domain" description="TRAM" evidence="1">
    <location>
        <begin position="373"/>
        <end position="435"/>
    </location>
</feature>
<feature type="binding site" evidence="1">
    <location>
        <position position="14"/>
    </location>
    <ligand>
        <name>[4Fe-4S] cluster</name>
        <dbReference type="ChEBI" id="CHEBI:49883"/>
        <label>1</label>
    </ligand>
</feature>
<feature type="binding site" evidence="1">
    <location>
        <position position="50"/>
    </location>
    <ligand>
        <name>[4Fe-4S] cluster</name>
        <dbReference type="ChEBI" id="CHEBI:49883"/>
        <label>1</label>
    </ligand>
</feature>
<feature type="binding site" evidence="1">
    <location>
        <position position="84"/>
    </location>
    <ligand>
        <name>[4Fe-4S] cluster</name>
        <dbReference type="ChEBI" id="CHEBI:49883"/>
        <label>1</label>
    </ligand>
</feature>
<feature type="binding site" evidence="1">
    <location>
        <position position="158"/>
    </location>
    <ligand>
        <name>[4Fe-4S] cluster</name>
        <dbReference type="ChEBI" id="CHEBI:49883"/>
        <label>2</label>
        <note>4Fe-4S-S-AdoMet</note>
    </ligand>
</feature>
<feature type="binding site" evidence="1">
    <location>
        <position position="162"/>
    </location>
    <ligand>
        <name>[4Fe-4S] cluster</name>
        <dbReference type="ChEBI" id="CHEBI:49883"/>
        <label>2</label>
        <note>4Fe-4S-S-AdoMet</note>
    </ligand>
</feature>
<feature type="binding site" evidence="1">
    <location>
        <position position="165"/>
    </location>
    <ligand>
        <name>[4Fe-4S] cluster</name>
        <dbReference type="ChEBI" id="CHEBI:49883"/>
        <label>2</label>
        <note>4Fe-4S-S-AdoMet</note>
    </ligand>
</feature>